<evidence type="ECO:0000250" key="1"/>
<evidence type="ECO:0000255" key="2"/>
<evidence type="ECO:0000256" key="3">
    <source>
        <dbReference type="SAM" id="MobiDB-lite"/>
    </source>
</evidence>
<evidence type="ECO:0000305" key="4"/>
<accession>Q6BH91</accession>
<protein>
    <recommendedName>
        <fullName>rRNA-processing protein EFG1</fullName>
    </recommendedName>
</protein>
<keyword id="KW-0175">Coiled coil</keyword>
<keyword id="KW-0539">Nucleus</keyword>
<keyword id="KW-1185">Reference proteome</keyword>
<keyword id="KW-0698">rRNA processing</keyword>
<name>EFG1P_DEBHA</name>
<reference key="1">
    <citation type="journal article" date="2004" name="Nature">
        <title>Genome evolution in yeasts.</title>
        <authorList>
            <person name="Dujon B."/>
            <person name="Sherman D."/>
            <person name="Fischer G."/>
            <person name="Durrens P."/>
            <person name="Casaregola S."/>
            <person name="Lafontaine I."/>
            <person name="de Montigny J."/>
            <person name="Marck C."/>
            <person name="Neuveglise C."/>
            <person name="Talla E."/>
            <person name="Goffard N."/>
            <person name="Frangeul L."/>
            <person name="Aigle M."/>
            <person name="Anthouard V."/>
            <person name="Babour A."/>
            <person name="Barbe V."/>
            <person name="Barnay S."/>
            <person name="Blanchin S."/>
            <person name="Beckerich J.-M."/>
            <person name="Beyne E."/>
            <person name="Bleykasten C."/>
            <person name="Boisrame A."/>
            <person name="Boyer J."/>
            <person name="Cattolico L."/>
            <person name="Confanioleri F."/>
            <person name="de Daruvar A."/>
            <person name="Despons L."/>
            <person name="Fabre E."/>
            <person name="Fairhead C."/>
            <person name="Ferry-Dumazet H."/>
            <person name="Groppi A."/>
            <person name="Hantraye F."/>
            <person name="Hennequin C."/>
            <person name="Jauniaux N."/>
            <person name="Joyet P."/>
            <person name="Kachouri R."/>
            <person name="Kerrest A."/>
            <person name="Koszul R."/>
            <person name="Lemaire M."/>
            <person name="Lesur I."/>
            <person name="Ma L."/>
            <person name="Muller H."/>
            <person name="Nicaud J.-M."/>
            <person name="Nikolski M."/>
            <person name="Oztas S."/>
            <person name="Ozier-Kalogeropoulos O."/>
            <person name="Pellenz S."/>
            <person name="Potier S."/>
            <person name="Richard G.-F."/>
            <person name="Straub M.-L."/>
            <person name="Suleau A."/>
            <person name="Swennen D."/>
            <person name="Tekaia F."/>
            <person name="Wesolowski-Louvel M."/>
            <person name="Westhof E."/>
            <person name="Wirth B."/>
            <person name="Zeniou-Meyer M."/>
            <person name="Zivanovic Y."/>
            <person name="Bolotin-Fukuhara M."/>
            <person name="Thierry A."/>
            <person name="Bouchier C."/>
            <person name="Caudron B."/>
            <person name="Scarpelli C."/>
            <person name="Gaillardin C."/>
            <person name="Weissenbach J."/>
            <person name="Wincker P."/>
            <person name="Souciet J.-L."/>
        </authorList>
    </citation>
    <scope>NUCLEOTIDE SEQUENCE [LARGE SCALE GENOMIC DNA]</scope>
    <source>
        <strain>ATCC 36239 / CBS 767 / BCRC 21394 / JCM 1990 / NBRC 0083 / IGC 2968</strain>
    </source>
</reference>
<comment type="function">
    <text evidence="1">Involved in rRNA processing.</text>
</comment>
<comment type="subcellular location">
    <subcellularLocation>
        <location evidence="1">Nucleus</location>
        <location evidence="1">Nucleolus</location>
    </subcellularLocation>
</comment>
<comment type="similarity">
    <text evidence="4">Belongs to the EFG1 family.</text>
</comment>
<gene>
    <name type="primary">EFG1</name>
    <name type="ordered locus">DEHA2G20416g</name>
</gene>
<organism>
    <name type="scientific">Debaryomyces hansenii (strain ATCC 36239 / CBS 767 / BCRC 21394 / JCM 1990 / NBRC 0083 / IGC 2968)</name>
    <name type="common">Yeast</name>
    <name type="synonym">Torulaspora hansenii</name>
    <dbReference type="NCBI Taxonomy" id="284592"/>
    <lineage>
        <taxon>Eukaryota</taxon>
        <taxon>Fungi</taxon>
        <taxon>Dikarya</taxon>
        <taxon>Ascomycota</taxon>
        <taxon>Saccharomycotina</taxon>
        <taxon>Pichiomycetes</taxon>
        <taxon>Debaryomycetaceae</taxon>
        <taxon>Debaryomyces</taxon>
    </lineage>
</organism>
<sequence length="236" mass="27463">MPRTARNNNMRSNGASIEVAGVIGTGASKTRKKMRDIERLLKKDTLPAHVRVENERALKALGVELQNTQHNLKAKQNAKKYHMVRFFEKKKAIRKLKQARKTLEDTASTEVRKDIKKARKVVKHSEVDIIYVMLFPKTEKYISLYPNPKEDDKTELSKNPKAKKGMQMTEERKRELRKQAERLLDENKLPFSIDDVLQGKTIRLDDTQNHAVLTEEIDAPSKKYNDEEEKEDDFFE</sequence>
<dbReference type="EMBL" id="CR382139">
    <property type="protein sequence ID" value="CAG90940.1"/>
    <property type="molecule type" value="Genomic_DNA"/>
</dbReference>
<dbReference type="RefSeq" id="XP_462430.1">
    <property type="nucleotide sequence ID" value="XM_462430.1"/>
</dbReference>
<dbReference type="SMR" id="Q6BH91"/>
<dbReference type="FunCoup" id="Q6BH91">
    <property type="interactions" value="189"/>
</dbReference>
<dbReference type="STRING" id="284592.Q6BH91"/>
<dbReference type="GeneID" id="2905377"/>
<dbReference type="KEGG" id="dha:DEHA2G20416g"/>
<dbReference type="VEuPathDB" id="FungiDB:DEHA2G20416g"/>
<dbReference type="eggNOG" id="KOG4484">
    <property type="taxonomic scope" value="Eukaryota"/>
</dbReference>
<dbReference type="HOGENOM" id="CLU_066912_2_0_1"/>
<dbReference type="InParanoid" id="Q6BH91"/>
<dbReference type="OMA" id="NYVKYYP"/>
<dbReference type="OrthoDB" id="47732at2759"/>
<dbReference type="Proteomes" id="UP000000599">
    <property type="component" value="Chromosome G"/>
</dbReference>
<dbReference type="GO" id="GO:0005730">
    <property type="term" value="C:nucleolus"/>
    <property type="evidence" value="ECO:0007669"/>
    <property type="project" value="UniProtKB-SubCell"/>
</dbReference>
<dbReference type="GO" id="GO:0030688">
    <property type="term" value="C:preribosome, small subunit precursor"/>
    <property type="evidence" value="ECO:0007669"/>
    <property type="project" value="TreeGrafter"/>
</dbReference>
<dbReference type="GO" id="GO:0000462">
    <property type="term" value="P:maturation of SSU-rRNA from tricistronic rRNA transcript (SSU-rRNA, 5.8S rRNA, LSU-rRNA)"/>
    <property type="evidence" value="ECO:0007669"/>
    <property type="project" value="TreeGrafter"/>
</dbReference>
<dbReference type="InterPro" id="IPR019310">
    <property type="entry name" value="Efg1"/>
</dbReference>
<dbReference type="InterPro" id="IPR050786">
    <property type="entry name" value="EFG1_rRNA-proc"/>
</dbReference>
<dbReference type="PANTHER" id="PTHR33911">
    <property type="entry name" value="RRNA-PROCESSING PROTEIN EFG1"/>
    <property type="match status" value="1"/>
</dbReference>
<dbReference type="PANTHER" id="PTHR33911:SF1">
    <property type="entry name" value="RRNA-PROCESSING PROTEIN EFG1"/>
    <property type="match status" value="1"/>
</dbReference>
<dbReference type="Pfam" id="PF10153">
    <property type="entry name" value="Efg1"/>
    <property type="match status" value="1"/>
</dbReference>
<proteinExistence type="inferred from homology"/>
<feature type="chain" id="PRO_0000330271" description="rRNA-processing protein EFG1">
    <location>
        <begin position="1"/>
        <end position="236"/>
    </location>
</feature>
<feature type="region of interest" description="Disordered" evidence="3">
    <location>
        <begin position="146"/>
        <end position="176"/>
    </location>
</feature>
<feature type="region of interest" description="Disordered" evidence="3">
    <location>
        <begin position="204"/>
        <end position="236"/>
    </location>
</feature>
<feature type="coiled-coil region" evidence="2">
    <location>
        <begin position="53"/>
        <end position="110"/>
    </location>
</feature>
<feature type="coiled-coil region" evidence="2">
    <location>
        <begin position="161"/>
        <end position="189"/>
    </location>
</feature>
<feature type="compositionally biased region" description="Basic and acidic residues" evidence="3">
    <location>
        <begin position="148"/>
        <end position="158"/>
    </location>
</feature>
<feature type="compositionally biased region" description="Acidic residues" evidence="3">
    <location>
        <begin position="226"/>
        <end position="236"/>
    </location>
</feature>